<feature type="chain" id="PRO_0000235083" description="4-diphosphocytidyl-2-C-methyl-D-erythritol kinase">
    <location>
        <begin position="1"/>
        <end position="358"/>
    </location>
</feature>
<feature type="active site" evidence="1">
    <location>
        <position position="24"/>
    </location>
</feature>
<feature type="active site" evidence="1">
    <location>
        <position position="186"/>
    </location>
</feature>
<feature type="binding site" evidence="1">
    <location>
        <begin position="138"/>
        <end position="148"/>
    </location>
    <ligand>
        <name>ATP</name>
        <dbReference type="ChEBI" id="CHEBI:30616"/>
    </ligand>
</feature>
<dbReference type="EC" id="2.7.1.148" evidence="1"/>
<dbReference type="EMBL" id="CR931997">
    <property type="protein sequence ID" value="CAI37683.1"/>
    <property type="molecule type" value="Genomic_DNA"/>
</dbReference>
<dbReference type="RefSeq" id="WP_011273933.1">
    <property type="nucleotide sequence ID" value="NC_007164.1"/>
</dbReference>
<dbReference type="SMR" id="Q4JU24"/>
<dbReference type="STRING" id="306537.jk1510"/>
<dbReference type="KEGG" id="cjk:jk1510"/>
<dbReference type="PATRIC" id="fig|306537.10.peg.1530"/>
<dbReference type="eggNOG" id="COG1947">
    <property type="taxonomic scope" value="Bacteria"/>
</dbReference>
<dbReference type="HOGENOM" id="CLU_053057_1_1_11"/>
<dbReference type="OrthoDB" id="3173073at2"/>
<dbReference type="UniPathway" id="UPA00056">
    <property type="reaction ID" value="UER00094"/>
</dbReference>
<dbReference type="Proteomes" id="UP000000545">
    <property type="component" value="Chromosome"/>
</dbReference>
<dbReference type="GO" id="GO:0050515">
    <property type="term" value="F:4-(cytidine 5'-diphospho)-2-C-methyl-D-erythritol kinase activity"/>
    <property type="evidence" value="ECO:0007669"/>
    <property type="project" value="UniProtKB-UniRule"/>
</dbReference>
<dbReference type="GO" id="GO:0005524">
    <property type="term" value="F:ATP binding"/>
    <property type="evidence" value="ECO:0007669"/>
    <property type="project" value="UniProtKB-UniRule"/>
</dbReference>
<dbReference type="GO" id="GO:0019288">
    <property type="term" value="P:isopentenyl diphosphate biosynthetic process, methylerythritol 4-phosphate pathway"/>
    <property type="evidence" value="ECO:0007669"/>
    <property type="project" value="UniProtKB-UniRule"/>
</dbReference>
<dbReference type="GO" id="GO:0016114">
    <property type="term" value="P:terpenoid biosynthetic process"/>
    <property type="evidence" value="ECO:0007669"/>
    <property type="project" value="InterPro"/>
</dbReference>
<dbReference type="Gene3D" id="3.30.230.10">
    <property type="match status" value="1"/>
</dbReference>
<dbReference type="Gene3D" id="3.30.70.890">
    <property type="entry name" value="GHMP kinase, C-terminal domain"/>
    <property type="match status" value="1"/>
</dbReference>
<dbReference type="HAMAP" id="MF_00061">
    <property type="entry name" value="IspE"/>
    <property type="match status" value="1"/>
</dbReference>
<dbReference type="InterPro" id="IPR013750">
    <property type="entry name" value="GHMP_kinase_C_dom"/>
</dbReference>
<dbReference type="InterPro" id="IPR036554">
    <property type="entry name" value="GHMP_kinase_C_sf"/>
</dbReference>
<dbReference type="InterPro" id="IPR006204">
    <property type="entry name" value="GHMP_kinase_N_dom"/>
</dbReference>
<dbReference type="InterPro" id="IPR004424">
    <property type="entry name" value="IspE"/>
</dbReference>
<dbReference type="InterPro" id="IPR020568">
    <property type="entry name" value="Ribosomal_Su5_D2-typ_SF"/>
</dbReference>
<dbReference type="InterPro" id="IPR014721">
    <property type="entry name" value="Ribsml_uS5_D2-typ_fold_subgr"/>
</dbReference>
<dbReference type="NCBIfam" id="NF002870">
    <property type="entry name" value="PRK03188.1"/>
    <property type="match status" value="1"/>
</dbReference>
<dbReference type="PANTHER" id="PTHR43527">
    <property type="entry name" value="4-DIPHOSPHOCYTIDYL-2-C-METHYL-D-ERYTHRITOL KINASE, CHLOROPLASTIC"/>
    <property type="match status" value="1"/>
</dbReference>
<dbReference type="PANTHER" id="PTHR43527:SF2">
    <property type="entry name" value="4-DIPHOSPHOCYTIDYL-2-C-METHYL-D-ERYTHRITOL KINASE, CHLOROPLASTIC"/>
    <property type="match status" value="1"/>
</dbReference>
<dbReference type="Pfam" id="PF08544">
    <property type="entry name" value="GHMP_kinases_C"/>
    <property type="match status" value="1"/>
</dbReference>
<dbReference type="Pfam" id="PF00288">
    <property type="entry name" value="GHMP_kinases_N"/>
    <property type="match status" value="1"/>
</dbReference>
<dbReference type="SUPFAM" id="SSF55060">
    <property type="entry name" value="GHMP Kinase, C-terminal domain"/>
    <property type="match status" value="1"/>
</dbReference>
<dbReference type="SUPFAM" id="SSF54211">
    <property type="entry name" value="Ribosomal protein S5 domain 2-like"/>
    <property type="match status" value="1"/>
</dbReference>
<protein>
    <recommendedName>
        <fullName evidence="1">4-diphosphocytidyl-2-C-methyl-D-erythritol kinase</fullName>
        <shortName evidence="1">CMK</shortName>
        <ecNumber evidence="1">2.7.1.148</ecNumber>
    </recommendedName>
    <alternativeName>
        <fullName evidence="1">4-(cytidine-5'-diphospho)-2-C-methyl-D-erythritol kinase</fullName>
    </alternativeName>
</protein>
<evidence type="ECO:0000255" key="1">
    <source>
        <dbReference type="HAMAP-Rule" id="MF_00061"/>
    </source>
</evidence>
<name>ISPE_CORJK</name>
<organism>
    <name type="scientific">Corynebacterium jeikeium (strain K411)</name>
    <dbReference type="NCBI Taxonomy" id="306537"/>
    <lineage>
        <taxon>Bacteria</taxon>
        <taxon>Bacillati</taxon>
        <taxon>Actinomycetota</taxon>
        <taxon>Actinomycetes</taxon>
        <taxon>Mycobacteriales</taxon>
        <taxon>Corynebacteriaceae</taxon>
        <taxon>Corynebacterium</taxon>
    </lineage>
</organism>
<proteinExistence type="inferred from homology"/>
<sequence>MSISHIFGPQQPQYSSVTASAHGKVNLHLGVGPAREDGYHELDTIFQAVSLKEEVTVALRDARGAQDAEAVQVAEAAQEAADAAPCTWSVSGFDSHLVPQDSSNLAWKAVAAIQKLARQAHVPWADAPVHIHIDKGIPVAGGMAGGSADAAAALVAATELYFPDSRASRRPDGAQLSDIAAELGADVPFCLLGGTARGTGKGENLMPVIATGTYHWAIATDKRGLSTPEVFKQLDQQRAAASAASPKAARAGSPEGLIAALRTGNPEEVGKLLVNDLQAPAISLLPSLRETLKAAEEAGAIAAIVSGSGPTVAMLCASADDAVEVATAVSVAGKASSTMTTSSPAAAAGVIKREEVLE</sequence>
<gene>
    <name evidence="1" type="primary">ispE</name>
    <name type="ordered locus">jk1510</name>
</gene>
<comment type="function">
    <text evidence="1">Catalyzes the phosphorylation of the position 2 hydroxy group of 4-diphosphocytidyl-2C-methyl-D-erythritol.</text>
</comment>
<comment type="catalytic activity">
    <reaction evidence="1">
        <text>4-CDP-2-C-methyl-D-erythritol + ATP = 4-CDP-2-C-methyl-D-erythritol 2-phosphate + ADP + H(+)</text>
        <dbReference type="Rhea" id="RHEA:18437"/>
        <dbReference type="ChEBI" id="CHEBI:15378"/>
        <dbReference type="ChEBI" id="CHEBI:30616"/>
        <dbReference type="ChEBI" id="CHEBI:57823"/>
        <dbReference type="ChEBI" id="CHEBI:57919"/>
        <dbReference type="ChEBI" id="CHEBI:456216"/>
        <dbReference type="EC" id="2.7.1.148"/>
    </reaction>
</comment>
<comment type="pathway">
    <text evidence="1">Isoprenoid biosynthesis; isopentenyl diphosphate biosynthesis via DXP pathway; isopentenyl diphosphate from 1-deoxy-D-xylulose 5-phosphate: step 3/6.</text>
</comment>
<comment type="similarity">
    <text evidence="1">Belongs to the GHMP kinase family. IspE subfamily.</text>
</comment>
<reference key="1">
    <citation type="journal article" date="2005" name="J. Bacteriol.">
        <title>Complete genome sequence and analysis of the multiresistant nosocomial pathogen Corynebacterium jeikeium K411, a lipid-requiring bacterium of the human skin flora.</title>
        <authorList>
            <person name="Tauch A."/>
            <person name="Kaiser O."/>
            <person name="Hain T."/>
            <person name="Goesmann A."/>
            <person name="Weisshaar B."/>
            <person name="Albersmeier A."/>
            <person name="Bekel T."/>
            <person name="Bischoff N."/>
            <person name="Brune I."/>
            <person name="Chakraborty T."/>
            <person name="Kalinowski J."/>
            <person name="Meyer F."/>
            <person name="Rupp O."/>
            <person name="Schneiker S."/>
            <person name="Viehoever P."/>
            <person name="Puehler A."/>
        </authorList>
    </citation>
    <scope>NUCLEOTIDE SEQUENCE [LARGE SCALE GENOMIC DNA]</scope>
    <source>
        <strain>K411</strain>
    </source>
</reference>
<accession>Q4JU24</accession>
<keyword id="KW-0067">ATP-binding</keyword>
<keyword id="KW-0414">Isoprene biosynthesis</keyword>
<keyword id="KW-0418">Kinase</keyword>
<keyword id="KW-0547">Nucleotide-binding</keyword>
<keyword id="KW-1185">Reference proteome</keyword>
<keyword id="KW-0808">Transferase</keyword>